<gene>
    <name evidence="1" type="primary">glyA</name>
    <name type="ordered locus">Cj0402</name>
</gene>
<organism>
    <name type="scientific">Campylobacter jejuni subsp. jejuni serotype O:2 (strain ATCC 700819 / NCTC 11168)</name>
    <dbReference type="NCBI Taxonomy" id="192222"/>
    <lineage>
        <taxon>Bacteria</taxon>
        <taxon>Pseudomonadati</taxon>
        <taxon>Campylobacterota</taxon>
        <taxon>Epsilonproteobacteria</taxon>
        <taxon>Campylobacterales</taxon>
        <taxon>Campylobacteraceae</taxon>
        <taxon>Campylobacter</taxon>
    </lineage>
</organism>
<sequence>MSLEMFDKEIFDLTNKELERQCEGLEMIASENFTLPEVMEVMGSILTNKYAEGYPGKRYYGGCEFVDEIETLAIERCKKLFNCKFANVQPNSGSQANQGVYAALINPGDKILGMDLSHGGHLTHGAKVSSSGKMYESCFYGVELDGRIDYEKVREIAKKEKPKLIVCGASAYARVIDFAKFREIADEIGAYLFADIAHIAGLVVAGEHPSPFPYAHVVSSTTHKTLRGPRGGIIMTNDEELAKKINSAIFPGIQGGPLMHVIAAKAVGFKFNLSDEWKVYAKQVRTNAQVLANVLMDRKFKLVSDGTDNHLVLMSFLDREFSGKDADLALGNAGITANKNTVPGEIRSPFITSGLRLGTPALTARGFKEKEMEIVSNYIADILDDVNNEKLQENIKQELKKLASNFIIYERAMF</sequence>
<keyword id="KW-0002">3D-structure</keyword>
<keyword id="KW-0028">Amino-acid biosynthesis</keyword>
<keyword id="KW-0963">Cytoplasm</keyword>
<keyword id="KW-0554">One-carbon metabolism</keyword>
<keyword id="KW-0663">Pyridoxal phosphate</keyword>
<keyword id="KW-1185">Reference proteome</keyword>
<keyword id="KW-0808">Transferase</keyword>
<protein>
    <recommendedName>
        <fullName evidence="1">Serine hydroxymethyltransferase</fullName>
        <shortName evidence="1">SHMT</shortName>
        <shortName evidence="1">Serine methylase</shortName>
        <ecNumber evidence="1">2.1.2.1</ecNumber>
    </recommendedName>
</protein>
<comment type="function">
    <text evidence="1">Catalyzes the reversible interconversion of serine and glycine with tetrahydrofolate (THF) serving as the one-carbon carrier. This reaction serves as the major source of one-carbon groups required for the biosynthesis of purines, thymidylate, methionine, and other important biomolecules. Also exhibits THF-independent aldolase activity toward beta-hydroxyamino acids, producing glycine and aldehydes, via a retro-aldol mechanism.</text>
</comment>
<comment type="catalytic activity">
    <reaction evidence="1">
        <text>(6R)-5,10-methylene-5,6,7,8-tetrahydrofolate + glycine + H2O = (6S)-5,6,7,8-tetrahydrofolate + L-serine</text>
        <dbReference type="Rhea" id="RHEA:15481"/>
        <dbReference type="ChEBI" id="CHEBI:15377"/>
        <dbReference type="ChEBI" id="CHEBI:15636"/>
        <dbReference type="ChEBI" id="CHEBI:33384"/>
        <dbReference type="ChEBI" id="CHEBI:57305"/>
        <dbReference type="ChEBI" id="CHEBI:57453"/>
        <dbReference type="EC" id="2.1.2.1"/>
    </reaction>
</comment>
<comment type="cofactor">
    <cofactor evidence="1">
        <name>pyridoxal 5'-phosphate</name>
        <dbReference type="ChEBI" id="CHEBI:597326"/>
    </cofactor>
</comment>
<comment type="pathway">
    <text evidence="1">One-carbon metabolism; tetrahydrofolate interconversion.</text>
</comment>
<comment type="pathway">
    <text evidence="1">Amino-acid biosynthesis; glycine biosynthesis; glycine from L-serine: step 1/1.</text>
</comment>
<comment type="subunit">
    <text evidence="1 2">Homodimer.</text>
</comment>
<comment type="subcellular location">
    <subcellularLocation>
        <location evidence="1">Cytoplasm</location>
    </subcellularLocation>
</comment>
<comment type="similarity">
    <text evidence="1 3">Belongs to the SHMT family.</text>
</comment>
<reference key="1">
    <citation type="journal article" date="1991" name="Gene">
        <title>Complete sequence of the Campylobacter jejuni glyA gene encoding serine hydroxymethyltransferase.</title>
        <authorList>
            <person name="Chan V.L."/>
            <person name="Bingham H.L."/>
        </authorList>
    </citation>
    <scope>NUCLEOTIDE SEQUENCE [GENOMIC DNA]</scope>
    <source>
        <strain>ATCC 43431 / TGH 9011 / Serotype O:3</strain>
    </source>
</reference>
<reference key="2">
    <citation type="journal article" date="2000" name="Nature">
        <title>The genome sequence of the food-borne pathogen Campylobacter jejuni reveals hypervariable sequences.</title>
        <authorList>
            <person name="Parkhill J."/>
            <person name="Wren B.W."/>
            <person name="Mungall K.L."/>
            <person name="Ketley J.M."/>
            <person name="Churcher C.M."/>
            <person name="Basham D."/>
            <person name="Chillingworth T."/>
            <person name="Davies R.M."/>
            <person name="Feltwell T."/>
            <person name="Holroyd S."/>
            <person name="Jagels K."/>
            <person name="Karlyshev A.V."/>
            <person name="Moule S."/>
            <person name="Pallen M.J."/>
            <person name="Penn C.W."/>
            <person name="Quail M.A."/>
            <person name="Rajandream M.A."/>
            <person name="Rutherford K.M."/>
            <person name="van Vliet A.H.M."/>
            <person name="Whitehead S."/>
            <person name="Barrell B.G."/>
        </authorList>
    </citation>
    <scope>NUCLEOTIDE SEQUENCE [LARGE SCALE GENOMIC DNA]</scope>
    <source>
        <strain>ATCC 700819 / NCTC 11168</strain>
    </source>
</reference>
<reference key="3">
    <citation type="submission" date="2010-05" db="PDB data bank">
        <title>Crystal structure of serine hydroxymethyltransferase from Campylobacter jejuni.</title>
        <authorList>
            <consortium name="Center for structural genomics of infectious diseases (CSGID)"/>
            <person name="Anderson S.M."/>
            <person name="Wawrzak Z."/>
            <person name="Onopriyenko O."/>
            <person name="Hasseman J."/>
            <person name="Anderson W.F."/>
            <person name="Savchenko A."/>
        </authorList>
    </citation>
    <scope>X-RAY CRYSTALLOGRAPHY (1.80 ANGSTROMS)</scope>
    <scope>SUBUNIT</scope>
</reference>
<name>GLYA_CAMJE</name>
<dbReference type="EC" id="2.1.2.1" evidence="1"/>
<dbReference type="EMBL" id="X53816">
    <property type="protein sequence ID" value="CAA37812.1"/>
    <property type="molecule type" value="Genomic_DNA"/>
</dbReference>
<dbReference type="EMBL" id="AL111168">
    <property type="protein sequence ID" value="CAL34552.1"/>
    <property type="molecule type" value="Genomic_DNA"/>
</dbReference>
<dbReference type="PIR" id="H81383">
    <property type="entry name" value="H81383"/>
</dbReference>
<dbReference type="PIR" id="JQ1016">
    <property type="entry name" value="JQ1016"/>
</dbReference>
<dbReference type="RefSeq" id="WP_002858710.1">
    <property type="nucleotide sequence ID" value="NZ_SZUC01000004.1"/>
</dbReference>
<dbReference type="RefSeq" id="YP_002343839.1">
    <property type="nucleotide sequence ID" value="NC_002163.1"/>
</dbReference>
<dbReference type="PDB" id="3N0L">
    <property type="method" value="X-ray"/>
    <property type="resolution" value="1.80 A"/>
    <property type="chains" value="A/B=1-414"/>
</dbReference>
<dbReference type="PDBsum" id="3N0L"/>
<dbReference type="SMR" id="P24531"/>
<dbReference type="IntAct" id="P24531">
    <property type="interactions" value="45"/>
</dbReference>
<dbReference type="STRING" id="192222.Cj0402"/>
<dbReference type="PaxDb" id="192222-Cj0402"/>
<dbReference type="EnsemblBacteria" id="CAL34552">
    <property type="protein sequence ID" value="CAL34552"/>
    <property type="gene ID" value="Cj0402"/>
</dbReference>
<dbReference type="GeneID" id="904726"/>
<dbReference type="KEGG" id="cje:Cj0402"/>
<dbReference type="PATRIC" id="fig|192222.6.peg.393"/>
<dbReference type="eggNOG" id="COG0112">
    <property type="taxonomic scope" value="Bacteria"/>
</dbReference>
<dbReference type="HOGENOM" id="CLU_022477_2_1_7"/>
<dbReference type="OrthoDB" id="9803846at2"/>
<dbReference type="UniPathway" id="UPA00193"/>
<dbReference type="UniPathway" id="UPA00288">
    <property type="reaction ID" value="UER01023"/>
</dbReference>
<dbReference type="EvolutionaryTrace" id="P24531"/>
<dbReference type="Proteomes" id="UP000000799">
    <property type="component" value="Chromosome"/>
</dbReference>
<dbReference type="GO" id="GO:0005829">
    <property type="term" value="C:cytosol"/>
    <property type="evidence" value="ECO:0007669"/>
    <property type="project" value="TreeGrafter"/>
</dbReference>
<dbReference type="GO" id="GO:0004372">
    <property type="term" value="F:glycine hydroxymethyltransferase activity"/>
    <property type="evidence" value="ECO:0007669"/>
    <property type="project" value="UniProtKB-UniRule"/>
</dbReference>
<dbReference type="GO" id="GO:0030170">
    <property type="term" value="F:pyridoxal phosphate binding"/>
    <property type="evidence" value="ECO:0007669"/>
    <property type="project" value="UniProtKB-UniRule"/>
</dbReference>
<dbReference type="GO" id="GO:0019264">
    <property type="term" value="P:glycine biosynthetic process from serine"/>
    <property type="evidence" value="ECO:0007669"/>
    <property type="project" value="UniProtKB-UniRule"/>
</dbReference>
<dbReference type="GO" id="GO:0035999">
    <property type="term" value="P:tetrahydrofolate interconversion"/>
    <property type="evidence" value="ECO:0007669"/>
    <property type="project" value="UniProtKB-UniRule"/>
</dbReference>
<dbReference type="CDD" id="cd00378">
    <property type="entry name" value="SHMT"/>
    <property type="match status" value="1"/>
</dbReference>
<dbReference type="FunFam" id="3.40.640.10:FF:000001">
    <property type="entry name" value="Serine hydroxymethyltransferase"/>
    <property type="match status" value="1"/>
</dbReference>
<dbReference type="Gene3D" id="3.90.1150.10">
    <property type="entry name" value="Aspartate Aminotransferase, domain 1"/>
    <property type="match status" value="1"/>
</dbReference>
<dbReference type="Gene3D" id="3.40.640.10">
    <property type="entry name" value="Type I PLP-dependent aspartate aminotransferase-like (Major domain)"/>
    <property type="match status" value="1"/>
</dbReference>
<dbReference type="HAMAP" id="MF_00051">
    <property type="entry name" value="SHMT"/>
    <property type="match status" value="1"/>
</dbReference>
<dbReference type="InterPro" id="IPR015424">
    <property type="entry name" value="PyrdxlP-dep_Trfase"/>
</dbReference>
<dbReference type="InterPro" id="IPR015421">
    <property type="entry name" value="PyrdxlP-dep_Trfase_major"/>
</dbReference>
<dbReference type="InterPro" id="IPR015422">
    <property type="entry name" value="PyrdxlP-dep_Trfase_small"/>
</dbReference>
<dbReference type="InterPro" id="IPR001085">
    <property type="entry name" value="Ser_HO-MeTrfase"/>
</dbReference>
<dbReference type="InterPro" id="IPR049943">
    <property type="entry name" value="Ser_HO-MeTrfase-like"/>
</dbReference>
<dbReference type="InterPro" id="IPR019798">
    <property type="entry name" value="Ser_HO-MeTrfase_PLP_BS"/>
</dbReference>
<dbReference type="InterPro" id="IPR039429">
    <property type="entry name" value="SHMT-like_dom"/>
</dbReference>
<dbReference type="NCBIfam" id="NF000586">
    <property type="entry name" value="PRK00011.1"/>
    <property type="match status" value="1"/>
</dbReference>
<dbReference type="PANTHER" id="PTHR11680">
    <property type="entry name" value="SERINE HYDROXYMETHYLTRANSFERASE"/>
    <property type="match status" value="1"/>
</dbReference>
<dbReference type="PANTHER" id="PTHR11680:SF50">
    <property type="entry name" value="SERINE HYDROXYMETHYLTRANSFERASE"/>
    <property type="match status" value="1"/>
</dbReference>
<dbReference type="Pfam" id="PF00464">
    <property type="entry name" value="SHMT"/>
    <property type="match status" value="1"/>
</dbReference>
<dbReference type="PIRSF" id="PIRSF000412">
    <property type="entry name" value="SHMT"/>
    <property type="match status" value="1"/>
</dbReference>
<dbReference type="SUPFAM" id="SSF53383">
    <property type="entry name" value="PLP-dependent transferases"/>
    <property type="match status" value="1"/>
</dbReference>
<dbReference type="PROSITE" id="PS00096">
    <property type="entry name" value="SHMT"/>
    <property type="match status" value="1"/>
</dbReference>
<proteinExistence type="evidence at protein level"/>
<feature type="chain" id="PRO_0000113554" description="Serine hydroxymethyltransferase">
    <location>
        <begin position="1"/>
        <end position="414"/>
    </location>
</feature>
<feature type="binding site" evidence="1">
    <location>
        <position position="116"/>
    </location>
    <ligand>
        <name>(6S)-5,6,7,8-tetrahydrofolate</name>
        <dbReference type="ChEBI" id="CHEBI:57453"/>
    </ligand>
</feature>
<feature type="binding site" evidence="1">
    <location>
        <begin position="120"/>
        <end position="122"/>
    </location>
    <ligand>
        <name>(6S)-5,6,7,8-tetrahydrofolate</name>
        <dbReference type="ChEBI" id="CHEBI:57453"/>
    </ligand>
</feature>
<feature type="binding site" evidence="1">
    <location>
        <position position="240"/>
    </location>
    <ligand>
        <name>(6S)-5,6,7,8-tetrahydrofolate</name>
        <dbReference type="ChEBI" id="CHEBI:57453"/>
    </ligand>
</feature>
<feature type="binding site" evidence="1">
    <location>
        <begin position="348"/>
        <end position="350"/>
    </location>
    <ligand>
        <name>(6S)-5,6,7,8-tetrahydrofolate</name>
        <dbReference type="ChEBI" id="CHEBI:57453"/>
    </ligand>
</feature>
<feature type="site" description="Plays an important role in substrate specificity" evidence="1">
    <location>
        <position position="223"/>
    </location>
</feature>
<feature type="modified residue" description="N6-(pyridoxal phosphate)lysine" evidence="1">
    <location>
        <position position="224"/>
    </location>
</feature>
<feature type="sequence conflict" description="In Ref. 1; CAA37812." evidence="3" ref="1">
    <original>I</original>
    <variation>V</variation>
    <location>
        <position position="188"/>
    </location>
</feature>
<feature type="sequence conflict" description="In Ref. 1; CAA37812." evidence="3" ref="1">
    <original>Y</original>
    <variation>H</variation>
    <location>
        <position position="214"/>
    </location>
</feature>
<feature type="sequence conflict" description="In Ref. 1; CAA37812." evidence="3" ref="1">
    <original>V</original>
    <variation>I</variation>
    <location>
        <position position="386"/>
    </location>
</feature>
<feature type="helix" evidence="4">
    <location>
        <begin position="1"/>
        <end position="6"/>
    </location>
</feature>
<feature type="helix" evidence="4">
    <location>
        <begin position="8"/>
        <end position="23"/>
    </location>
</feature>
<feature type="strand" evidence="4">
    <location>
        <begin position="24"/>
        <end position="26"/>
    </location>
</feature>
<feature type="helix" evidence="4">
    <location>
        <begin position="36"/>
        <end position="42"/>
    </location>
</feature>
<feature type="helix" evidence="4">
    <location>
        <begin position="45"/>
        <end position="48"/>
    </location>
</feature>
<feature type="strand" evidence="4">
    <location>
        <begin position="57"/>
        <end position="61"/>
    </location>
</feature>
<feature type="helix" evidence="4">
    <location>
        <begin position="64"/>
        <end position="81"/>
    </location>
</feature>
<feature type="strand" evidence="4">
    <location>
        <begin position="84"/>
        <end position="87"/>
    </location>
</feature>
<feature type="helix" evidence="4">
    <location>
        <begin position="93"/>
        <end position="104"/>
    </location>
</feature>
<feature type="strand" evidence="4">
    <location>
        <begin position="110"/>
        <end position="114"/>
    </location>
</feature>
<feature type="strand" evidence="4">
    <location>
        <begin position="135"/>
        <end position="140"/>
    </location>
</feature>
<feature type="helix" evidence="4">
    <location>
        <begin position="150"/>
        <end position="160"/>
    </location>
</feature>
<feature type="strand" evidence="4">
    <location>
        <begin position="163"/>
        <end position="167"/>
    </location>
</feature>
<feature type="helix" evidence="4">
    <location>
        <begin position="178"/>
        <end position="188"/>
    </location>
</feature>
<feature type="strand" evidence="4">
    <location>
        <begin position="191"/>
        <end position="195"/>
    </location>
</feature>
<feature type="turn" evidence="4">
    <location>
        <begin position="197"/>
        <end position="199"/>
    </location>
</feature>
<feature type="helix" evidence="4">
    <location>
        <begin position="200"/>
        <end position="204"/>
    </location>
</feature>
<feature type="turn" evidence="4">
    <location>
        <begin position="212"/>
        <end position="214"/>
    </location>
</feature>
<feature type="strand" evidence="4">
    <location>
        <begin position="216"/>
        <end position="223"/>
    </location>
</feature>
<feature type="turn" evidence="4">
    <location>
        <begin position="224"/>
        <end position="226"/>
    </location>
</feature>
<feature type="strand" evidence="4">
    <location>
        <begin position="232"/>
        <end position="237"/>
    </location>
</feature>
<feature type="helix" evidence="4">
    <location>
        <begin position="239"/>
        <end position="249"/>
    </location>
</feature>
<feature type="turn" evidence="4">
    <location>
        <begin position="250"/>
        <end position="253"/>
    </location>
</feature>
<feature type="helix" evidence="4">
    <location>
        <begin position="259"/>
        <end position="272"/>
    </location>
</feature>
<feature type="helix" evidence="4">
    <location>
        <begin position="275"/>
        <end position="297"/>
    </location>
</feature>
<feature type="helix" evidence="4">
    <location>
        <begin position="303"/>
        <end position="305"/>
    </location>
</feature>
<feature type="strand" evidence="4">
    <location>
        <begin position="308"/>
        <end position="315"/>
    </location>
</feature>
<feature type="strand" evidence="4">
    <location>
        <begin position="319"/>
        <end position="321"/>
    </location>
</feature>
<feature type="helix" evidence="4">
    <location>
        <begin position="323"/>
        <end position="332"/>
    </location>
</feature>
<feature type="turn" evidence="4">
    <location>
        <begin position="349"/>
        <end position="351"/>
    </location>
</feature>
<feature type="strand" evidence="4">
    <location>
        <begin position="353"/>
        <end position="358"/>
    </location>
</feature>
<feature type="helix" evidence="4">
    <location>
        <begin position="360"/>
        <end position="364"/>
    </location>
</feature>
<feature type="helix" evidence="4">
    <location>
        <begin position="369"/>
        <end position="384"/>
    </location>
</feature>
<feature type="turn" evidence="4">
    <location>
        <begin position="385"/>
        <end position="387"/>
    </location>
</feature>
<feature type="helix" evidence="4">
    <location>
        <begin position="389"/>
        <end position="403"/>
    </location>
</feature>
<evidence type="ECO:0000255" key="1">
    <source>
        <dbReference type="HAMAP-Rule" id="MF_00051"/>
    </source>
</evidence>
<evidence type="ECO:0000269" key="2">
    <source ref="3"/>
</evidence>
<evidence type="ECO:0000305" key="3"/>
<evidence type="ECO:0007829" key="4">
    <source>
        <dbReference type="PDB" id="3N0L"/>
    </source>
</evidence>
<accession>P24531</accession>
<accession>Q0PBA8</accession>
<accession>Q9PIA3</accession>